<keyword id="KW-0093">Biotin biosynthesis</keyword>
<keyword id="KW-0963">Cytoplasm</keyword>
<keyword id="KW-0378">Hydrolase</keyword>
<keyword id="KW-0719">Serine esterase</keyword>
<gene>
    <name evidence="1" type="primary">bioH</name>
    <name type="ordered locus">Patl_4230</name>
</gene>
<comment type="function">
    <text evidence="1">The physiological role of BioH is to remove the methyl group introduced by BioC when the pimeloyl moiety is complete. It allows to synthesize pimeloyl-ACP via the fatty acid synthetic pathway through the hydrolysis of the ester bonds of pimeloyl-ACP esters.</text>
</comment>
<comment type="catalytic activity">
    <reaction evidence="1">
        <text>6-carboxyhexanoyl-[ACP] methyl ester + H2O = 6-carboxyhexanoyl-[ACP] + methanol + H(+)</text>
        <dbReference type="Rhea" id="RHEA:42700"/>
        <dbReference type="Rhea" id="RHEA-COMP:9955"/>
        <dbReference type="Rhea" id="RHEA-COMP:10186"/>
        <dbReference type="ChEBI" id="CHEBI:15377"/>
        <dbReference type="ChEBI" id="CHEBI:15378"/>
        <dbReference type="ChEBI" id="CHEBI:17790"/>
        <dbReference type="ChEBI" id="CHEBI:78846"/>
        <dbReference type="ChEBI" id="CHEBI:82735"/>
        <dbReference type="EC" id="3.1.1.85"/>
    </reaction>
</comment>
<comment type="pathway">
    <text evidence="1">Cofactor biosynthesis; biotin biosynthesis.</text>
</comment>
<comment type="subunit">
    <text evidence="1">Monomer.</text>
</comment>
<comment type="subcellular location">
    <subcellularLocation>
        <location evidence="1">Cytoplasm</location>
    </subcellularLocation>
</comment>
<comment type="similarity">
    <text evidence="1">Belongs to the AB hydrolase superfamily. Carboxylesterase BioH family.</text>
</comment>
<accession>Q15N09</accession>
<evidence type="ECO:0000255" key="1">
    <source>
        <dbReference type="HAMAP-Rule" id="MF_01260"/>
    </source>
</evidence>
<protein>
    <recommendedName>
        <fullName evidence="1">Pimeloyl-[acyl-carrier protein] methyl ester esterase</fullName>
        <ecNumber evidence="1">3.1.1.85</ecNumber>
    </recommendedName>
    <alternativeName>
        <fullName evidence="1">Biotin synthesis protein BioH</fullName>
    </alternativeName>
    <alternativeName>
        <fullName evidence="1">Carboxylesterase BioH</fullName>
    </alternativeName>
</protein>
<sequence>MHTTLKTRTVGSGPNFVLLHGWGVNSGVWQPIAKQLEQHFSVTYVDLPGFGENNQIMPKPYDLKNLAECVANVLPENSVLAGWSLGGLVAQHVALLEPTNVKQLILIATSPKFQKGNDWAGIDPNILQAFSQQLVKNLSKTIERFLAIQAMGSDSAKTDIRKIKNSIEASPQADIAALTAGLDILEHVDLRDQIAALKMPIHWMLGRLDSLVPVKLQGYVQRSLAKNHSVTIFPHASHAPFISHTEDFLIDLMENTLR</sequence>
<organism>
    <name type="scientific">Pseudoalteromonas atlantica (strain T6c / ATCC BAA-1087)</name>
    <dbReference type="NCBI Taxonomy" id="3042615"/>
    <lineage>
        <taxon>Bacteria</taxon>
        <taxon>Pseudomonadati</taxon>
        <taxon>Pseudomonadota</taxon>
        <taxon>Gammaproteobacteria</taxon>
        <taxon>Alteromonadales</taxon>
        <taxon>Alteromonadaceae</taxon>
        <taxon>Paraglaciecola</taxon>
    </lineage>
</organism>
<proteinExistence type="inferred from homology"/>
<reference key="1">
    <citation type="submission" date="2006-06" db="EMBL/GenBank/DDBJ databases">
        <title>Complete sequence of Pseudoalteromonas atlantica T6c.</title>
        <authorList>
            <consortium name="US DOE Joint Genome Institute"/>
            <person name="Copeland A."/>
            <person name="Lucas S."/>
            <person name="Lapidus A."/>
            <person name="Barry K."/>
            <person name="Detter J.C."/>
            <person name="Glavina del Rio T."/>
            <person name="Hammon N."/>
            <person name="Israni S."/>
            <person name="Dalin E."/>
            <person name="Tice H."/>
            <person name="Pitluck S."/>
            <person name="Saunders E."/>
            <person name="Brettin T."/>
            <person name="Bruce D."/>
            <person name="Han C."/>
            <person name="Tapia R."/>
            <person name="Gilna P."/>
            <person name="Schmutz J."/>
            <person name="Larimer F."/>
            <person name="Land M."/>
            <person name="Hauser L."/>
            <person name="Kyrpides N."/>
            <person name="Kim E."/>
            <person name="Karls A.C."/>
            <person name="Bartlett D."/>
            <person name="Higgins B.P."/>
            <person name="Richardson P."/>
        </authorList>
    </citation>
    <scope>NUCLEOTIDE SEQUENCE [LARGE SCALE GENOMIC DNA]</scope>
    <source>
        <strain>T6c / ATCC BAA-1087</strain>
    </source>
</reference>
<dbReference type="EC" id="3.1.1.85" evidence="1"/>
<dbReference type="EMBL" id="CP000388">
    <property type="protein sequence ID" value="ABG42729.1"/>
    <property type="molecule type" value="Genomic_DNA"/>
</dbReference>
<dbReference type="RefSeq" id="WP_011576915.1">
    <property type="nucleotide sequence ID" value="NC_008228.1"/>
</dbReference>
<dbReference type="SMR" id="Q15N09"/>
<dbReference type="STRING" id="342610.Patl_4230"/>
<dbReference type="ESTHER" id="psea6-q15n09">
    <property type="family name" value="BioH"/>
</dbReference>
<dbReference type="KEGG" id="pat:Patl_4230"/>
<dbReference type="eggNOG" id="COG0596">
    <property type="taxonomic scope" value="Bacteria"/>
</dbReference>
<dbReference type="HOGENOM" id="CLU_020336_12_2_6"/>
<dbReference type="OrthoDB" id="9780744at2"/>
<dbReference type="UniPathway" id="UPA00078"/>
<dbReference type="Proteomes" id="UP000001981">
    <property type="component" value="Chromosome"/>
</dbReference>
<dbReference type="GO" id="GO:0005737">
    <property type="term" value="C:cytoplasm"/>
    <property type="evidence" value="ECO:0007669"/>
    <property type="project" value="UniProtKB-SubCell"/>
</dbReference>
<dbReference type="GO" id="GO:0016020">
    <property type="term" value="C:membrane"/>
    <property type="evidence" value="ECO:0007669"/>
    <property type="project" value="TreeGrafter"/>
</dbReference>
<dbReference type="GO" id="GO:0090499">
    <property type="term" value="F:pimelyl-[acyl-carrier protein] methyl ester esterase activity"/>
    <property type="evidence" value="ECO:0007669"/>
    <property type="project" value="UniProtKB-EC"/>
</dbReference>
<dbReference type="GO" id="GO:0009102">
    <property type="term" value="P:biotin biosynthetic process"/>
    <property type="evidence" value="ECO:0007669"/>
    <property type="project" value="UniProtKB-UniRule"/>
</dbReference>
<dbReference type="Gene3D" id="3.40.50.1820">
    <property type="entry name" value="alpha/beta hydrolase"/>
    <property type="match status" value="1"/>
</dbReference>
<dbReference type="HAMAP" id="MF_01260">
    <property type="entry name" value="Carboxylester"/>
    <property type="match status" value="1"/>
</dbReference>
<dbReference type="InterPro" id="IPR000073">
    <property type="entry name" value="AB_hydrolase_1"/>
</dbReference>
<dbReference type="InterPro" id="IPR029058">
    <property type="entry name" value="AB_hydrolase_fold"/>
</dbReference>
<dbReference type="InterPro" id="IPR050266">
    <property type="entry name" value="AB_hydrolase_sf"/>
</dbReference>
<dbReference type="InterPro" id="IPR010076">
    <property type="entry name" value="BioH"/>
</dbReference>
<dbReference type="NCBIfam" id="TIGR01738">
    <property type="entry name" value="bioH"/>
    <property type="match status" value="1"/>
</dbReference>
<dbReference type="PANTHER" id="PTHR43798:SF31">
    <property type="entry name" value="AB HYDROLASE SUPERFAMILY PROTEIN YCLE"/>
    <property type="match status" value="1"/>
</dbReference>
<dbReference type="PANTHER" id="PTHR43798">
    <property type="entry name" value="MONOACYLGLYCEROL LIPASE"/>
    <property type="match status" value="1"/>
</dbReference>
<dbReference type="Pfam" id="PF00561">
    <property type="entry name" value="Abhydrolase_1"/>
    <property type="match status" value="1"/>
</dbReference>
<dbReference type="PRINTS" id="PR00111">
    <property type="entry name" value="ABHYDROLASE"/>
</dbReference>
<dbReference type="SUPFAM" id="SSF53474">
    <property type="entry name" value="alpha/beta-Hydrolases"/>
    <property type="match status" value="1"/>
</dbReference>
<feature type="chain" id="PRO_1000085809" description="Pimeloyl-[acyl-carrier protein] methyl ester esterase">
    <location>
        <begin position="1"/>
        <end position="258"/>
    </location>
</feature>
<feature type="active site" description="Nucleophile" evidence="1">
    <location>
        <position position="84"/>
    </location>
</feature>
<feature type="active site" evidence="1">
    <location>
        <position position="209"/>
    </location>
</feature>
<feature type="active site" evidence="1">
    <location>
        <position position="238"/>
    </location>
</feature>
<feature type="binding site" evidence="1">
    <location>
        <position position="22"/>
    </location>
    <ligand>
        <name>substrate</name>
    </ligand>
</feature>
<feature type="binding site" evidence="1">
    <location>
        <begin position="84"/>
        <end position="85"/>
    </location>
    <ligand>
        <name>substrate</name>
    </ligand>
</feature>
<feature type="binding site" evidence="1">
    <location>
        <begin position="145"/>
        <end position="149"/>
    </location>
    <ligand>
        <name>substrate</name>
    </ligand>
</feature>
<feature type="binding site" evidence="1">
    <location>
        <position position="238"/>
    </location>
    <ligand>
        <name>substrate</name>
    </ligand>
</feature>
<name>BIOH_PSEA6</name>